<sequence length="207" mass="23431">MLNKLSLLLKDAGISLTDHQKNQLIAYVNMLHKWNKAYNLTSVRDPNEMLVRHILDSIVVAPYLQGERFIDVGTGPGLPGIPLSIVRPEAHFTLLDSLGKRVRFLRQVQHELKLENIEPVQSRVEEFPSEPPFDGVISRAFASLNDMVSWCHHLPGEQGRFYALKGQMPEDEIALLPEEYQVESVVKLQVPALDGERHLVVIKANKI</sequence>
<protein>
    <recommendedName>
        <fullName evidence="1">Ribosomal RNA small subunit methyltransferase G</fullName>
        <ecNumber evidence="1">2.1.1.170</ecNumber>
    </recommendedName>
    <alternativeName>
        <fullName evidence="1">16S rRNA 7-methylguanosine methyltransferase</fullName>
        <shortName evidence="1">16S rRNA m7G methyltransferase</shortName>
    </alternativeName>
</protein>
<accession>B6I3X7</accession>
<feature type="chain" id="PRO_1000092628" description="Ribosomal RNA small subunit methyltransferase G">
    <location>
        <begin position="1"/>
        <end position="207"/>
    </location>
</feature>
<feature type="binding site" evidence="1">
    <location>
        <position position="73"/>
    </location>
    <ligand>
        <name>S-adenosyl-L-methionine</name>
        <dbReference type="ChEBI" id="CHEBI:59789"/>
    </ligand>
</feature>
<feature type="binding site" evidence="1">
    <location>
        <position position="78"/>
    </location>
    <ligand>
        <name>S-adenosyl-L-methionine</name>
        <dbReference type="ChEBI" id="CHEBI:59789"/>
    </ligand>
</feature>
<feature type="binding site" evidence="1">
    <location>
        <begin position="124"/>
        <end position="125"/>
    </location>
    <ligand>
        <name>S-adenosyl-L-methionine</name>
        <dbReference type="ChEBI" id="CHEBI:59789"/>
    </ligand>
</feature>
<feature type="binding site" evidence="1">
    <location>
        <position position="139"/>
    </location>
    <ligand>
        <name>S-adenosyl-L-methionine</name>
        <dbReference type="ChEBI" id="CHEBI:59789"/>
    </ligand>
</feature>
<comment type="function">
    <text evidence="1">Specifically methylates the N7 position of guanine in position 527 of 16S rRNA.</text>
</comment>
<comment type="catalytic activity">
    <reaction evidence="1">
        <text>guanosine(527) in 16S rRNA + S-adenosyl-L-methionine = N(7)-methylguanosine(527) in 16S rRNA + S-adenosyl-L-homocysteine</text>
        <dbReference type="Rhea" id="RHEA:42732"/>
        <dbReference type="Rhea" id="RHEA-COMP:10209"/>
        <dbReference type="Rhea" id="RHEA-COMP:10210"/>
        <dbReference type="ChEBI" id="CHEBI:57856"/>
        <dbReference type="ChEBI" id="CHEBI:59789"/>
        <dbReference type="ChEBI" id="CHEBI:74269"/>
        <dbReference type="ChEBI" id="CHEBI:74480"/>
        <dbReference type="EC" id="2.1.1.170"/>
    </reaction>
</comment>
<comment type="subcellular location">
    <subcellularLocation>
        <location evidence="1">Cytoplasm</location>
    </subcellularLocation>
</comment>
<comment type="similarity">
    <text evidence="1">Belongs to the methyltransferase superfamily. RNA methyltransferase RsmG family.</text>
</comment>
<gene>
    <name evidence="1" type="primary">rsmG</name>
    <name type="ordered locus">ECSE_4030</name>
</gene>
<name>RSMG_ECOSE</name>
<keyword id="KW-0963">Cytoplasm</keyword>
<keyword id="KW-0489">Methyltransferase</keyword>
<keyword id="KW-0698">rRNA processing</keyword>
<keyword id="KW-0949">S-adenosyl-L-methionine</keyword>
<keyword id="KW-0808">Transferase</keyword>
<organism>
    <name type="scientific">Escherichia coli (strain SE11)</name>
    <dbReference type="NCBI Taxonomy" id="409438"/>
    <lineage>
        <taxon>Bacteria</taxon>
        <taxon>Pseudomonadati</taxon>
        <taxon>Pseudomonadota</taxon>
        <taxon>Gammaproteobacteria</taxon>
        <taxon>Enterobacterales</taxon>
        <taxon>Enterobacteriaceae</taxon>
        <taxon>Escherichia</taxon>
    </lineage>
</organism>
<proteinExistence type="inferred from homology"/>
<reference key="1">
    <citation type="journal article" date="2008" name="DNA Res.">
        <title>Complete genome sequence and comparative analysis of the wild-type commensal Escherichia coli strain SE11 isolated from a healthy adult.</title>
        <authorList>
            <person name="Oshima K."/>
            <person name="Toh H."/>
            <person name="Ogura Y."/>
            <person name="Sasamoto H."/>
            <person name="Morita H."/>
            <person name="Park S.-H."/>
            <person name="Ooka T."/>
            <person name="Iyoda S."/>
            <person name="Taylor T.D."/>
            <person name="Hayashi T."/>
            <person name="Itoh K."/>
            <person name="Hattori M."/>
        </authorList>
    </citation>
    <scope>NUCLEOTIDE SEQUENCE [LARGE SCALE GENOMIC DNA]</scope>
    <source>
        <strain>SE11</strain>
    </source>
</reference>
<evidence type="ECO:0000255" key="1">
    <source>
        <dbReference type="HAMAP-Rule" id="MF_00074"/>
    </source>
</evidence>
<dbReference type="EC" id="2.1.1.170" evidence="1"/>
<dbReference type="EMBL" id="AP009240">
    <property type="protein sequence ID" value="BAG79554.1"/>
    <property type="molecule type" value="Genomic_DNA"/>
</dbReference>
<dbReference type="RefSeq" id="WP_000932839.1">
    <property type="nucleotide sequence ID" value="NC_011415.1"/>
</dbReference>
<dbReference type="SMR" id="B6I3X7"/>
<dbReference type="GeneID" id="93778227"/>
<dbReference type="KEGG" id="ecy:ECSE_4030"/>
<dbReference type="HOGENOM" id="CLU_065341_2_2_6"/>
<dbReference type="Proteomes" id="UP000008199">
    <property type="component" value="Chromosome"/>
</dbReference>
<dbReference type="GO" id="GO:0005829">
    <property type="term" value="C:cytosol"/>
    <property type="evidence" value="ECO:0007669"/>
    <property type="project" value="TreeGrafter"/>
</dbReference>
<dbReference type="GO" id="GO:0070043">
    <property type="term" value="F:rRNA (guanine-N7-)-methyltransferase activity"/>
    <property type="evidence" value="ECO:0007669"/>
    <property type="project" value="UniProtKB-UniRule"/>
</dbReference>
<dbReference type="CDD" id="cd02440">
    <property type="entry name" value="AdoMet_MTases"/>
    <property type="match status" value="1"/>
</dbReference>
<dbReference type="FunFam" id="3.40.50.150:FF:000032">
    <property type="entry name" value="Ribosomal RNA small subunit methyltransferase G"/>
    <property type="match status" value="1"/>
</dbReference>
<dbReference type="Gene3D" id="3.40.50.150">
    <property type="entry name" value="Vaccinia Virus protein VP39"/>
    <property type="match status" value="1"/>
</dbReference>
<dbReference type="HAMAP" id="MF_00074">
    <property type="entry name" value="16SrRNA_methyltr_G"/>
    <property type="match status" value="1"/>
</dbReference>
<dbReference type="InterPro" id="IPR003682">
    <property type="entry name" value="rRNA_ssu_MeTfrase_G"/>
</dbReference>
<dbReference type="InterPro" id="IPR029063">
    <property type="entry name" value="SAM-dependent_MTases_sf"/>
</dbReference>
<dbReference type="NCBIfam" id="TIGR00138">
    <property type="entry name" value="rsmG_gidB"/>
    <property type="match status" value="1"/>
</dbReference>
<dbReference type="PANTHER" id="PTHR31760">
    <property type="entry name" value="S-ADENOSYL-L-METHIONINE-DEPENDENT METHYLTRANSFERASES SUPERFAMILY PROTEIN"/>
    <property type="match status" value="1"/>
</dbReference>
<dbReference type="PANTHER" id="PTHR31760:SF0">
    <property type="entry name" value="S-ADENOSYL-L-METHIONINE-DEPENDENT METHYLTRANSFERASES SUPERFAMILY PROTEIN"/>
    <property type="match status" value="1"/>
</dbReference>
<dbReference type="Pfam" id="PF02527">
    <property type="entry name" value="GidB"/>
    <property type="match status" value="1"/>
</dbReference>
<dbReference type="PIRSF" id="PIRSF003078">
    <property type="entry name" value="GidB"/>
    <property type="match status" value="1"/>
</dbReference>
<dbReference type="SUPFAM" id="SSF53335">
    <property type="entry name" value="S-adenosyl-L-methionine-dependent methyltransferases"/>
    <property type="match status" value="1"/>
</dbReference>